<evidence type="ECO:0000255" key="1">
    <source>
        <dbReference type="HAMAP-Rule" id="MF_01297"/>
    </source>
</evidence>
<organism>
    <name type="scientific">Frankia casuarinae (strain DSM 45818 / CECT 9043 / HFP020203 / CcI3)</name>
    <dbReference type="NCBI Taxonomy" id="106370"/>
    <lineage>
        <taxon>Bacteria</taxon>
        <taxon>Bacillati</taxon>
        <taxon>Actinomycetota</taxon>
        <taxon>Actinomycetes</taxon>
        <taxon>Frankiales</taxon>
        <taxon>Frankiaceae</taxon>
        <taxon>Frankia</taxon>
    </lineage>
</organism>
<accession>Q2JFV4</accession>
<sequence length="188" mass="20226">MSAGKRSAAGSARSDTATSTVDLHASLLPLAFLVGTWRGEGVGGYEGLDGFHYGQEITFAADGRPALGYVSHTWWADEPRDGREPGSPLATETGFWRVQPGEDGKPVVEVMLAHPFGIAEIYVGTVTGTRIDLDHNVLIRTATARDVTRSVRLYGLVEGCDLAYAIDMEAEGKPMQSHLSARLHRVSD</sequence>
<comment type="function">
    <text evidence="1">Heme-binding protein able to scavenge peroxynitrite and to protect free L-tyrosine against peroxynitrite-mediated nitration, by acting as a peroxynitrite isomerase that converts peroxynitrite to nitrate. Therefore, this protein likely plays a role in peroxynitrite sensing and in the detoxification of reactive nitrogen and oxygen species (RNS and ROS, respectively). Is able to bind nitric oxide (NO) in vitro, but may act as a sensor of peroxynitrite levels in vivo.</text>
</comment>
<comment type="catalytic activity">
    <reaction evidence="1">
        <text>peroxynitrite = nitrate</text>
        <dbReference type="Rhea" id="RHEA:63116"/>
        <dbReference type="ChEBI" id="CHEBI:17632"/>
        <dbReference type="ChEBI" id="CHEBI:25941"/>
    </reaction>
    <physiologicalReaction direction="left-to-right" evidence="1">
        <dbReference type="Rhea" id="RHEA:63117"/>
    </physiologicalReaction>
</comment>
<comment type="cofactor">
    <cofactor evidence="1">
        <name>heme b</name>
        <dbReference type="ChEBI" id="CHEBI:60344"/>
    </cofactor>
    <text evidence="1">Binds 1 heme b group per subunit, that coordinates a highly solvent-exposed Fe(III) atom.</text>
</comment>
<comment type="pathway">
    <text evidence="1">Nitrogen metabolism.</text>
</comment>
<comment type="subunit">
    <text evidence="1">Homodimer.</text>
</comment>
<comment type="domain">
    <text evidence="1">Forms a 10-stranded antiparallel beta-barrel structure able to accommodate a hydrophobic ligand in its interior. In fact, this fold hosts the heme group, which is located in a wide surface cleft.</text>
</comment>
<comment type="similarity">
    <text evidence="1">Belongs to the nitrobindin family.</text>
</comment>
<keyword id="KW-0349">Heme</keyword>
<keyword id="KW-0408">Iron</keyword>
<keyword id="KW-0413">Isomerase</keyword>
<keyword id="KW-0479">Metal-binding</keyword>
<keyword id="KW-1185">Reference proteome</keyword>
<gene>
    <name type="ordered locus">Francci3_0452</name>
</gene>
<proteinExistence type="inferred from homology"/>
<feature type="chain" id="PRO_0000356906" description="Peroxynitrite isomerase">
    <location>
        <begin position="1"/>
        <end position="188"/>
    </location>
</feature>
<feature type="short sequence motif" description="GXWXGXG" evidence="1">
    <location>
        <begin position="35"/>
        <end position="41"/>
    </location>
</feature>
<feature type="binding site" description="axial binding residue" evidence="1">
    <location>
        <position position="178"/>
    </location>
    <ligand>
        <name>heme b</name>
        <dbReference type="ChEBI" id="CHEBI:60344"/>
    </ligand>
    <ligandPart>
        <name>Fe</name>
        <dbReference type="ChEBI" id="CHEBI:18248"/>
    </ligandPart>
</feature>
<protein>
    <recommendedName>
        <fullName>Peroxynitrite isomerase</fullName>
        <ecNumber evidence="1">5.99.-.-</ecNumber>
    </recommendedName>
    <alternativeName>
        <fullName>Ferric nitrobindin</fullName>
        <shortName>Nb(III)</shortName>
    </alternativeName>
</protein>
<reference key="1">
    <citation type="journal article" date="2007" name="Genome Res.">
        <title>Genome characteristics of facultatively symbiotic Frankia sp. strains reflect host range and host plant biogeography.</title>
        <authorList>
            <person name="Normand P."/>
            <person name="Lapierre P."/>
            <person name="Tisa L.S."/>
            <person name="Gogarten J.P."/>
            <person name="Alloisio N."/>
            <person name="Bagnarol E."/>
            <person name="Bassi C.A."/>
            <person name="Berry A.M."/>
            <person name="Bickhart D.M."/>
            <person name="Choisne N."/>
            <person name="Couloux A."/>
            <person name="Cournoyer B."/>
            <person name="Cruveiller S."/>
            <person name="Daubin V."/>
            <person name="Demange N."/>
            <person name="Francino M.P."/>
            <person name="Goltsman E."/>
            <person name="Huang Y."/>
            <person name="Kopp O.R."/>
            <person name="Labarre L."/>
            <person name="Lapidus A."/>
            <person name="Lavire C."/>
            <person name="Marechal J."/>
            <person name="Martinez M."/>
            <person name="Mastronunzio J.E."/>
            <person name="Mullin B.C."/>
            <person name="Niemann J."/>
            <person name="Pujic P."/>
            <person name="Rawnsley T."/>
            <person name="Rouy Z."/>
            <person name="Schenowitz C."/>
            <person name="Sellstedt A."/>
            <person name="Tavares F."/>
            <person name="Tomkins J.P."/>
            <person name="Vallenet D."/>
            <person name="Valverde C."/>
            <person name="Wall L.G."/>
            <person name="Wang Y."/>
            <person name="Medigue C."/>
            <person name="Benson D.R."/>
        </authorList>
    </citation>
    <scope>NUCLEOTIDE SEQUENCE [LARGE SCALE GENOMIC DNA]</scope>
    <source>
        <strain>DSM 45818 / CECT 9043 / HFP020203 / CcI3</strain>
    </source>
</reference>
<name>NB_FRACC</name>
<dbReference type="EC" id="5.99.-.-" evidence="1"/>
<dbReference type="EMBL" id="CP000249">
    <property type="protein sequence ID" value="ABD09838.1"/>
    <property type="molecule type" value="Genomic_DNA"/>
</dbReference>
<dbReference type="RefSeq" id="WP_011434916.1">
    <property type="nucleotide sequence ID" value="NZ_JENI01000018.1"/>
</dbReference>
<dbReference type="SMR" id="Q2JFV4"/>
<dbReference type="STRING" id="106370.Francci3_0452"/>
<dbReference type="KEGG" id="fra:Francci3_0452"/>
<dbReference type="eggNOG" id="COG4044">
    <property type="taxonomic scope" value="Bacteria"/>
</dbReference>
<dbReference type="HOGENOM" id="CLU_085483_0_0_11"/>
<dbReference type="OrthoDB" id="4804006at2"/>
<dbReference type="PhylomeDB" id="Q2JFV4"/>
<dbReference type="Proteomes" id="UP000001937">
    <property type="component" value="Chromosome"/>
</dbReference>
<dbReference type="GO" id="GO:0020037">
    <property type="term" value="F:heme binding"/>
    <property type="evidence" value="ECO:0007669"/>
    <property type="project" value="UniProtKB-UniRule"/>
</dbReference>
<dbReference type="GO" id="GO:0046872">
    <property type="term" value="F:metal ion binding"/>
    <property type="evidence" value="ECO:0007669"/>
    <property type="project" value="UniProtKB-KW"/>
</dbReference>
<dbReference type="GO" id="GO:0062213">
    <property type="term" value="F:peroxynitrite isomerase activity"/>
    <property type="evidence" value="ECO:0007669"/>
    <property type="project" value="UniProtKB-UniRule"/>
</dbReference>
<dbReference type="CDD" id="cd07828">
    <property type="entry name" value="lipocalin_heme-bd-THAP4-like"/>
    <property type="match status" value="1"/>
</dbReference>
<dbReference type="Gene3D" id="2.40.128.20">
    <property type="match status" value="1"/>
</dbReference>
<dbReference type="HAMAP" id="MF_01297">
    <property type="entry name" value="nitrobindin"/>
    <property type="match status" value="1"/>
</dbReference>
<dbReference type="InterPro" id="IPR012674">
    <property type="entry name" value="Calycin"/>
</dbReference>
<dbReference type="InterPro" id="IPR022939">
    <property type="entry name" value="Nb(III)_bact/plant"/>
</dbReference>
<dbReference type="InterPro" id="IPR045165">
    <property type="entry name" value="Nitrobindin"/>
</dbReference>
<dbReference type="InterPro" id="IPR014878">
    <property type="entry name" value="THAP4-like_heme-bd"/>
</dbReference>
<dbReference type="PANTHER" id="PTHR15854:SF4">
    <property type="entry name" value="PEROXYNITRITE ISOMERASE THAP4"/>
    <property type="match status" value="1"/>
</dbReference>
<dbReference type="PANTHER" id="PTHR15854">
    <property type="entry name" value="THAP4 PROTEIN"/>
    <property type="match status" value="1"/>
</dbReference>
<dbReference type="Pfam" id="PF08768">
    <property type="entry name" value="THAP4_heme-bd"/>
    <property type="match status" value="1"/>
</dbReference>
<dbReference type="SUPFAM" id="SSF50814">
    <property type="entry name" value="Lipocalins"/>
    <property type="match status" value="1"/>
</dbReference>